<reference key="1">
    <citation type="journal article" date="2004" name="Science">
        <title>The Ashbya gossypii genome as a tool for mapping the ancient Saccharomyces cerevisiae genome.</title>
        <authorList>
            <person name="Dietrich F.S."/>
            <person name="Voegeli S."/>
            <person name="Brachat S."/>
            <person name="Lerch A."/>
            <person name="Gates K."/>
            <person name="Steiner S."/>
            <person name="Mohr C."/>
            <person name="Poehlmann R."/>
            <person name="Luedi P."/>
            <person name="Choi S."/>
            <person name="Wing R.A."/>
            <person name="Flavier A."/>
            <person name="Gaffney T.D."/>
            <person name="Philippsen P."/>
        </authorList>
    </citation>
    <scope>NUCLEOTIDE SEQUENCE [LARGE SCALE GENOMIC DNA]</scope>
    <source>
        <strain>ATCC 10895 / CBS 109.51 / FGSC 9923 / NRRL Y-1056</strain>
    </source>
</reference>
<reference key="2">
    <citation type="journal article" date="2013" name="G3 (Bethesda)">
        <title>Genomes of Ashbya fungi isolated from insects reveal four mating-type loci, numerous translocations, lack of transposons, and distinct gene duplications.</title>
        <authorList>
            <person name="Dietrich F.S."/>
            <person name="Voegeli S."/>
            <person name="Kuo S."/>
            <person name="Philippsen P."/>
        </authorList>
    </citation>
    <scope>GENOME REANNOTATION</scope>
    <source>
        <strain>ATCC 10895 / CBS 109.51 / FGSC 9923 / NRRL Y-1056</strain>
    </source>
</reference>
<gene>
    <name type="primary">ALG13</name>
    <name type="ordered locus">AGL042W</name>
</gene>
<proteinExistence type="inferred from homology"/>
<accession>Q750J3</accession>
<sequence length="203" mass="21794">MSTTTKSKMEGPKTVVVTCGATVPFPGLVNAVLDRRVLAELAQCGFSRVMVQYGRGFAAEFERQVGAAGAVRAACDAEGLEGCDAHAWRWQGLEIIGFAFHAQMESLIGTSAALVVSHAGTGSILDALRQQKPLIVCVNEALLDNHQEQIARRFEALGHLWAIRADVDELAGALARSTRETLAPLPPAYKQGFAELLQDVAHR</sequence>
<organism>
    <name type="scientific">Eremothecium gossypii (strain ATCC 10895 / CBS 109.51 / FGSC 9923 / NRRL Y-1056)</name>
    <name type="common">Yeast</name>
    <name type="synonym">Ashbya gossypii</name>
    <dbReference type="NCBI Taxonomy" id="284811"/>
    <lineage>
        <taxon>Eukaryota</taxon>
        <taxon>Fungi</taxon>
        <taxon>Dikarya</taxon>
        <taxon>Ascomycota</taxon>
        <taxon>Saccharomycotina</taxon>
        <taxon>Saccharomycetes</taxon>
        <taxon>Saccharomycetales</taxon>
        <taxon>Saccharomycetaceae</taxon>
        <taxon>Eremothecium</taxon>
    </lineage>
</organism>
<name>ALG13_EREGS</name>
<protein>
    <recommendedName>
        <fullName>UDP-N-acetylglucosamine transferase subunit ALG13</fullName>
        <ecNumber>2.4.1.141</ecNumber>
    </recommendedName>
    <alternativeName>
        <fullName>Asparagine-linked glycosylation protein 13</fullName>
    </alternativeName>
</protein>
<feature type="chain" id="PRO_0000215596" description="UDP-N-acetylglucosamine transferase subunit ALG13">
    <location>
        <begin position="1"/>
        <end position="203"/>
    </location>
</feature>
<keyword id="KW-0256">Endoplasmic reticulum</keyword>
<keyword id="KW-0328">Glycosyltransferase</keyword>
<keyword id="KW-1185">Reference proteome</keyword>
<keyword id="KW-0808">Transferase</keyword>
<dbReference type="EC" id="2.4.1.141"/>
<dbReference type="EMBL" id="AE016820">
    <property type="protein sequence ID" value="AAS54448.1"/>
    <property type="molecule type" value="Genomic_DNA"/>
</dbReference>
<dbReference type="RefSeq" id="NP_986624.1">
    <property type="nucleotide sequence ID" value="NM_211686.1"/>
</dbReference>
<dbReference type="SMR" id="Q750J3"/>
<dbReference type="FunCoup" id="Q750J3">
    <property type="interactions" value="339"/>
</dbReference>
<dbReference type="STRING" id="284811.Q750J3"/>
<dbReference type="EnsemblFungi" id="AAS54448">
    <property type="protein sequence ID" value="AAS54448"/>
    <property type="gene ID" value="AGOS_AGL042W"/>
</dbReference>
<dbReference type="GeneID" id="4622923"/>
<dbReference type="KEGG" id="ago:AGOS_AGL042W"/>
<dbReference type="eggNOG" id="KOG3349">
    <property type="taxonomic scope" value="Eukaryota"/>
</dbReference>
<dbReference type="HOGENOM" id="CLU_085408_2_0_1"/>
<dbReference type="InParanoid" id="Q750J3"/>
<dbReference type="OMA" id="ILDAWKM"/>
<dbReference type="OrthoDB" id="20273at2759"/>
<dbReference type="Proteomes" id="UP000000591">
    <property type="component" value="Chromosome VII"/>
</dbReference>
<dbReference type="GO" id="GO:0098548">
    <property type="term" value="C:cytoplasmic side of Golgi membrane"/>
    <property type="evidence" value="ECO:0007669"/>
    <property type="project" value="EnsemblFungi"/>
</dbReference>
<dbReference type="GO" id="GO:0005829">
    <property type="term" value="C:cytosol"/>
    <property type="evidence" value="ECO:0007669"/>
    <property type="project" value="EnsemblFungi"/>
</dbReference>
<dbReference type="GO" id="GO:0043541">
    <property type="term" value="C:UDP-N-acetylglucosamine transferase complex"/>
    <property type="evidence" value="ECO:0007669"/>
    <property type="project" value="EnsemblFungi"/>
</dbReference>
<dbReference type="GO" id="GO:0042802">
    <property type="term" value="F:identical protein binding"/>
    <property type="evidence" value="ECO:0007669"/>
    <property type="project" value="EnsemblFungi"/>
</dbReference>
<dbReference type="GO" id="GO:0004577">
    <property type="term" value="F:N-acetylglucosaminyldiphosphodolichol N-acetylglucosaminyltransferase activity"/>
    <property type="evidence" value="ECO:0007669"/>
    <property type="project" value="UniProtKB-EC"/>
</dbReference>
<dbReference type="GO" id="GO:0006488">
    <property type="term" value="P:dolichol-linked oligosaccharide biosynthetic process"/>
    <property type="evidence" value="ECO:0007669"/>
    <property type="project" value="EnsemblFungi"/>
</dbReference>
<dbReference type="Gene3D" id="3.40.50.2000">
    <property type="entry name" value="Glycogen Phosphorylase B"/>
    <property type="match status" value="1"/>
</dbReference>
<dbReference type="InterPro" id="IPR007235">
    <property type="entry name" value="Glyco_trans_28_C"/>
</dbReference>
<dbReference type="InterPro" id="IPR052474">
    <property type="entry name" value="UDP-GlcNAc_transferase"/>
</dbReference>
<dbReference type="PANTHER" id="PTHR47043">
    <property type="entry name" value="UDP-N-ACETYLGLUCOSAMINE TRANSFERASE SUBUNIT ALG13"/>
    <property type="match status" value="1"/>
</dbReference>
<dbReference type="PANTHER" id="PTHR47043:SF1">
    <property type="entry name" value="UDP-N-ACETYLGLUCOSAMINE TRANSFERASE SUBUNIT ALG13"/>
    <property type="match status" value="1"/>
</dbReference>
<dbReference type="Pfam" id="PF04101">
    <property type="entry name" value="Glyco_tran_28_C"/>
    <property type="match status" value="1"/>
</dbReference>
<dbReference type="SUPFAM" id="SSF53756">
    <property type="entry name" value="UDP-Glycosyltransferase/glycogen phosphorylase"/>
    <property type="match status" value="1"/>
</dbReference>
<evidence type="ECO:0000250" key="1"/>
<evidence type="ECO:0000305" key="2"/>
<comment type="function">
    <text evidence="1">Involved in protein N-glycosylation. Essential for the second step of the dolichol-linked oligosaccharide pathway (By similarity).</text>
</comment>
<comment type="catalytic activity">
    <reaction>
        <text>an N-acetyl-alpha-D-glucosaminyl-diphospho-di-trans,poly-cis-dolichol + UDP-N-acetyl-alpha-D-glucosamine = an N,N'-diacetylchitobiosyl-diphospho-di-trans,poly-cis-dolichol + UDP + H(+)</text>
        <dbReference type="Rhea" id="RHEA:23380"/>
        <dbReference type="Rhea" id="RHEA-COMP:19507"/>
        <dbReference type="Rhea" id="RHEA-COMP:19510"/>
        <dbReference type="ChEBI" id="CHEBI:15378"/>
        <dbReference type="ChEBI" id="CHEBI:57269"/>
        <dbReference type="ChEBI" id="CHEBI:57705"/>
        <dbReference type="ChEBI" id="CHEBI:58223"/>
        <dbReference type="ChEBI" id="CHEBI:58427"/>
        <dbReference type="EC" id="2.4.1.141"/>
    </reaction>
</comment>
<comment type="subunit">
    <text evidence="1">Heterodimer with ALG14 to form a functional enzyme.</text>
</comment>
<comment type="subcellular location">
    <subcellularLocation>
        <location evidence="1">Endoplasmic reticulum</location>
    </subcellularLocation>
</comment>
<comment type="similarity">
    <text evidence="2">Belongs to the glycosyltransferase 28 family.</text>
</comment>